<proteinExistence type="evidence at transcript level"/>
<feature type="chain" id="PRO_0000342764" description="Pentatricopeptide repeat-containing protein At1g09190">
    <location>
        <begin position="1"/>
        <end position="484"/>
    </location>
</feature>
<feature type="repeat" description="PPR 1">
    <location>
        <begin position="66"/>
        <end position="100"/>
    </location>
</feature>
<feature type="repeat" description="PPR 2">
    <location>
        <begin position="101"/>
        <end position="135"/>
    </location>
</feature>
<feature type="repeat" description="PPR 3">
    <location>
        <begin position="136"/>
        <end position="166"/>
    </location>
</feature>
<feature type="repeat" description="PPR 4">
    <location>
        <begin position="167"/>
        <end position="197"/>
    </location>
</feature>
<feature type="repeat" description="PPR 5">
    <location>
        <begin position="198"/>
        <end position="232"/>
    </location>
</feature>
<feature type="repeat" description="PPR 6">
    <location>
        <begin position="233"/>
        <end position="267"/>
    </location>
</feature>
<feature type="repeat" description="PPR 7">
    <location>
        <begin position="269"/>
        <end position="299"/>
    </location>
</feature>
<feature type="repeat" description="PPR 8">
    <location>
        <begin position="300"/>
        <end position="334"/>
    </location>
</feature>
<feature type="repeat" description="PPR 9">
    <location>
        <begin position="336"/>
        <end position="366"/>
    </location>
</feature>
<feature type="repeat" description="PPR 10">
    <location>
        <begin position="372"/>
        <end position="406"/>
    </location>
</feature>
<feature type="region of interest" description="Type E motif">
    <location>
        <begin position="407"/>
        <end position="482"/>
    </location>
</feature>
<reference key="1">
    <citation type="journal article" date="2000" name="Nature">
        <title>Sequence and analysis of chromosome 1 of the plant Arabidopsis thaliana.</title>
        <authorList>
            <person name="Theologis A."/>
            <person name="Ecker J.R."/>
            <person name="Palm C.J."/>
            <person name="Federspiel N.A."/>
            <person name="Kaul S."/>
            <person name="White O."/>
            <person name="Alonso J."/>
            <person name="Altafi H."/>
            <person name="Araujo R."/>
            <person name="Bowman C.L."/>
            <person name="Brooks S.Y."/>
            <person name="Buehler E."/>
            <person name="Chan A."/>
            <person name="Chao Q."/>
            <person name="Chen H."/>
            <person name="Cheuk R.F."/>
            <person name="Chin C.W."/>
            <person name="Chung M.K."/>
            <person name="Conn L."/>
            <person name="Conway A.B."/>
            <person name="Conway A.R."/>
            <person name="Creasy T.H."/>
            <person name="Dewar K."/>
            <person name="Dunn P."/>
            <person name="Etgu P."/>
            <person name="Feldblyum T.V."/>
            <person name="Feng J.-D."/>
            <person name="Fong B."/>
            <person name="Fujii C.Y."/>
            <person name="Gill J.E."/>
            <person name="Goldsmith A.D."/>
            <person name="Haas B."/>
            <person name="Hansen N.F."/>
            <person name="Hughes B."/>
            <person name="Huizar L."/>
            <person name="Hunter J.L."/>
            <person name="Jenkins J."/>
            <person name="Johnson-Hopson C."/>
            <person name="Khan S."/>
            <person name="Khaykin E."/>
            <person name="Kim C.J."/>
            <person name="Koo H.L."/>
            <person name="Kremenetskaia I."/>
            <person name="Kurtz D.B."/>
            <person name="Kwan A."/>
            <person name="Lam B."/>
            <person name="Langin-Hooper S."/>
            <person name="Lee A."/>
            <person name="Lee J.M."/>
            <person name="Lenz C.A."/>
            <person name="Li J.H."/>
            <person name="Li Y.-P."/>
            <person name="Lin X."/>
            <person name="Liu S.X."/>
            <person name="Liu Z.A."/>
            <person name="Luros J.S."/>
            <person name="Maiti R."/>
            <person name="Marziali A."/>
            <person name="Militscher J."/>
            <person name="Miranda M."/>
            <person name="Nguyen M."/>
            <person name="Nierman W.C."/>
            <person name="Osborne B.I."/>
            <person name="Pai G."/>
            <person name="Peterson J."/>
            <person name="Pham P.K."/>
            <person name="Rizzo M."/>
            <person name="Rooney T."/>
            <person name="Rowley D."/>
            <person name="Sakano H."/>
            <person name="Salzberg S.L."/>
            <person name="Schwartz J.R."/>
            <person name="Shinn P."/>
            <person name="Southwick A.M."/>
            <person name="Sun H."/>
            <person name="Tallon L.J."/>
            <person name="Tambunga G."/>
            <person name="Toriumi M.J."/>
            <person name="Town C.D."/>
            <person name="Utterback T."/>
            <person name="Van Aken S."/>
            <person name="Vaysberg M."/>
            <person name="Vysotskaia V.S."/>
            <person name="Walker M."/>
            <person name="Wu D."/>
            <person name="Yu G."/>
            <person name="Fraser C.M."/>
            <person name="Venter J.C."/>
            <person name="Davis R.W."/>
        </authorList>
    </citation>
    <scope>NUCLEOTIDE SEQUENCE [LARGE SCALE GENOMIC DNA]</scope>
    <source>
        <strain>cv. Columbia</strain>
    </source>
</reference>
<reference key="2">
    <citation type="journal article" date="2017" name="Plant J.">
        <title>Araport11: a complete reannotation of the Arabidopsis thaliana reference genome.</title>
        <authorList>
            <person name="Cheng C.Y."/>
            <person name="Krishnakumar V."/>
            <person name="Chan A.P."/>
            <person name="Thibaud-Nissen F."/>
            <person name="Schobel S."/>
            <person name="Town C.D."/>
        </authorList>
    </citation>
    <scope>GENOME REANNOTATION</scope>
    <source>
        <strain>cv. Columbia</strain>
    </source>
</reference>
<reference key="3">
    <citation type="journal article" date="2003" name="Science">
        <title>Empirical analysis of transcriptional activity in the Arabidopsis genome.</title>
        <authorList>
            <person name="Yamada K."/>
            <person name="Lim J."/>
            <person name="Dale J.M."/>
            <person name="Chen H."/>
            <person name="Shinn P."/>
            <person name="Palm C.J."/>
            <person name="Southwick A.M."/>
            <person name="Wu H.C."/>
            <person name="Kim C.J."/>
            <person name="Nguyen M."/>
            <person name="Pham P.K."/>
            <person name="Cheuk R.F."/>
            <person name="Karlin-Newmann G."/>
            <person name="Liu S.X."/>
            <person name="Lam B."/>
            <person name="Sakano H."/>
            <person name="Wu T."/>
            <person name="Yu G."/>
            <person name="Miranda M."/>
            <person name="Quach H.L."/>
            <person name="Tripp M."/>
            <person name="Chang C.H."/>
            <person name="Lee J.M."/>
            <person name="Toriumi M.J."/>
            <person name="Chan M.M."/>
            <person name="Tang C.C."/>
            <person name="Onodera C.S."/>
            <person name="Deng J.M."/>
            <person name="Akiyama K."/>
            <person name="Ansari Y."/>
            <person name="Arakawa T."/>
            <person name="Banh J."/>
            <person name="Banno F."/>
            <person name="Bowser L."/>
            <person name="Brooks S.Y."/>
            <person name="Carninci P."/>
            <person name="Chao Q."/>
            <person name="Choy N."/>
            <person name="Enju A."/>
            <person name="Goldsmith A.D."/>
            <person name="Gurjal M."/>
            <person name="Hansen N.F."/>
            <person name="Hayashizaki Y."/>
            <person name="Johnson-Hopson C."/>
            <person name="Hsuan V.W."/>
            <person name="Iida K."/>
            <person name="Karnes M."/>
            <person name="Khan S."/>
            <person name="Koesema E."/>
            <person name="Ishida J."/>
            <person name="Jiang P.X."/>
            <person name="Jones T."/>
            <person name="Kawai J."/>
            <person name="Kamiya A."/>
            <person name="Meyers C."/>
            <person name="Nakajima M."/>
            <person name="Narusaka M."/>
            <person name="Seki M."/>
            <person name="Sakurai T."/>
            <person name="Satou M."/>
            <person name="Tamse R."/>
            <person name="Vaysberg M."/>
            <person name="Wallender E.K."/>
            <person name="Wong C."/>
            <person name="Yamamura Y."/>
            <person name="Yuan S."/>
            <person name="Shinozaki K."/>
            <person name="Davis R.W."/>
            <person name="Theologis A."/>
            <person name="Ecker J.R."/>
        </authorList>
    </citation>
    <scope>NUCLEOTIDE SEQUENCE [LARGE SCALE MRNA]</scope>
    <source>
        <strain>cv. Columbia</strain>
    </source>
</reference>
<reference key="4">
    <citation type="journal article" date="2004" name="Plant Cell">
        <title>Genome-wide analysis of Arabidopsis pentatricopeptide repeat proteins reveals their essential role in organelle biogenesis.</title>
        <authorList>
            <person name="Lurin C."/>
            <person name="Andres C."/>
            <person name="Aubourg S."/>
            <person name="Bellaoui M."/>
            <person name="Bitton F."/>
            <person name="Bruyere C."/>
            <person name="Caboche M."/>
            <person name="Debast C."/>
            <person name="Gualberto J."/>
            <person name="Hoffmann B."/>
            <person name="Lecharny A."/>
            <person name="Le Ret M."/>
            <person name="Martin-Magniette M.-L."/>
            <person name="Mireau H."/>
            <person name="Peeters N."/>
            <person name="Renou J.-P."/>
            <person name="Szurek B."/>
            <person name="Taconnat L."/>
            <person name="Small I."/>
        </authorList>
    </citation>
    <scope>GENE FAMILY</scope>
</reference>
<evidence type="ECO:0000305" key="1"/>
<protein>
    <recommendedName>
        <fullName>Pentatricopeptide repeat-containing protein At1g09190</fullName>
    </recommendedName>
</protein>
<gene>
    <name type="primary">PCMP-E70</name>
    <name type="ordered locus">At1g09190</name>
    <name type="ORF">T12M4.11</name>
</gene>
<accession>O80488</accession>
<name>PPR23_ARATH</name>
<sequence>MEIERKLLRLLHGHNTRTRLPEIHAHLLRHFLHGSNLLLAHFISICGSLSNSDYANRVFSHIQNPNVLVFNAMIKCYSLVGPPLESLSFFSSMKSRGIWADEYTYAPLLKSCSSLSDLRFGKCVHGELIRTGFHRLGKIRIGVVELYTSGGRMGDAQKVFDEMSERNVVVWNLMIRGFCDSGDVERGLHLFKQMSERSIVSWNSMISSLSKCGRDREALELFCEMIDQGFDPDEATVVTVLPISASLGVLDTGKWIHSTAESSGLFKDFITVGNALVDFYCKSGDLEAATAIFRKMQRRNVVSWNTLISGSAVNGKGEFGIDLFDAMIEEGKVAPNEATFLGVLACCSYTGQVERGEELFGLMMERFKLEARTEHYGAMVDLMSRSGRITEAFKFLKNMPVNANAAMWGSLLSACRSHGDVKLAEVAAMELVKIEPGNSGNYVLLSNLYAEEGRWQDVEKVRTLMKKNRLRKSTGQSTICDVSV</sequence>
<keyword id="KW-1185">Reference proteome</keyword>
<keyword id="KW-0677">Repeat</keyword>
<comment type="similarity">
    <text evidence="1">Belongs to the PPR family. PCMP-E subfamily.</text>
</comment>
<comment type="online information" name="Pentatricopeptide repeat proteins">
    <link uri="https://ppr.plantenergy.uwa.edu.au"/>
</comment>
<dbReference type="EMBL" id="AC003114">
    <property type="protein sequence ID" value="AAC24086.1"/>
    <property type="molecule type" value="Genomic_DNA"/>
</dbReference>
<dbReference type="EMBL" id="CP002684">
    <property type="protein sequence ID" value="AEE28410.1"/>
    <property type="molecule type" value="Genomic_DNA"/>
</dbReference>
<dbReference type="EMBL" id="BT003981">
    <property type="protein sequence ID" value="AAO42022.1"/>
    <property type="molecule type" value="mRNA"/>
</dbReference>
<dbReference type="PIR" id="E86224">
    <property type="entry name" value="E86224"/>
</dbReference>
<dbReference type="RefSeq" id="NP_172391.2">
    <property type="nucleotide sequence ID" value="NM_100789.4"/>
</dbReference>
<dbReference type="SMR" id="O80488"/>
<dbReference type="FunCoup" id="O80488">
    <property type="interactions" value="254"/>
</dbReference>
<dbReference type="STRING" id="3702.O80488"/>
<dbReference type="iPTMnet" id="O80488"/>
<dbReference type="PaxDb" id="3702-AT1G09190.1"/>
<dbReference type="ProteomicsDB" id="226398"/>
<dbReference type="EnsemblPlants" id="AT1G09190.1">
    <property type="protein sequence ID" value="AT1G09190.1"/>
    <property type="gene ID" value="AT1G09190"/>
</dbReference>
<dbReference type="GeneID" id="837439"/>
<dbReference type="Gramene" id="AT1G09190.1">
    <property type="protein sequence ID" value="AT1G09190.1"/>
    <property type="gene ID" value="AT1G09190"/>
</dbReference>
<dbReference type="KEGG" id="ath:AT1G09190"/>
<dbReference type="Araport" id="AT1G09190"/>
<dbReference type="TAIR" id="AT1G09190"/>
<dbReference type="eggNOG" id="KOG4197">
    <property type="taxonomic scope" value="Eukaryota"/>
</dbReference>
<dbReference type="HOGENOM" id="CLU_002706_0_6_1"/>
<dbReference type="InParanoid" id="O80488"/>
<dbReference type="OMA" id="TCCAHAG"/>
<dbReference type="PhylomeDB" id="O80488"/>
<dbReference type="PRO" id="PR:O80488"/>
<dbReference type="Proteomes" id="UP000006548">
    <property type="component" value="Chromosome 1"/>
</dbReference>
<dbReference type="ExpressionAtlas" id="O80488">
    <property type="expression patterns" value="baseline and differential"/>
</dbReference>
<dbReference type="GO" id="GO:0003723">
    <property type="term" value="F:RNA binding"/>
    <property type="evidence" value="ECO:0007669"/>
    <property type="project" value="InterPro"/>
</dbReference>
<dbReference type="GO" id="GO:0009451">
    <property type="term" value="P:RNA modification"/>
    <property type="evidence" value="ECO:0007669"/>
    <property type="project" value="InterPro"/>
</dbReference>
<dbReference type="FunFam" id="1.25.40.10:FF:000334">
    <property type="entry name" value="Pentatricopeptide repeat-containing protein"/>
    <property type="match status" value="1"/>
</dbReference>
<dbReference type="FunFam" id="1.25.40.10:FF:001030">
    <property type="entry name" value="Pentatricopeptide repeat-containing protein At1g09190"/>
    <property type="match status" value="1"/>
</dbReference>
<dbReference type="FunFam" id="1.25.40.10:FF:000921">
    <property type="entry name" value="Pentatricopeptide repeat-containing protein At5g48910"/>
    <property type="match status" value="1"/>
</dbReference>
<dbReference type="Gene3D" id="1.25.40.10">
    <property type="entry name" value="Tetratricopeptide repeat domain"/>
    <property type="match status" value="3"/>
</dbReference>
<dbReference type="InterPro" id="IPR046848">
    <property type="entry name" value="E_motif"/>
</dbReference>
<dbReference type="InterPro" id="IPR002885">
    <property type="entry name" value="Pentatricopeptide_rpt"/>
</dbReference>
<dbReference type="InterPro" id="IPR046960">
    <property type="entry name" value="PPR_At4g14850-like_plant"/>
</dbReference>
<dbReference type="InterPro" id="IPR011990">
    <property type="entry name" value="TPR-like_helical_dom_sf"/>
</dbReference>
<dbReference type="NCBIfam" id="TIGR00756">
    <property type="entry name" value="PPR"/>
    <property type="match status" value="5"/>
</dbReference>
<dbReference type="PANTHER" id="PTHR47926">
    <property type="entry name" value="PENTATRICOPEPTIDE REPEAT-CONTAINING PROTEIN"/>
    <property type="match status" value="1"/>
</dbReference>
<dbReference type="PANTHER" id="PTHR47926:SF540">
    <property type="entry name" value="PENTATRICOPEPTIDE REPEAT-CONTAINING PROTEIN"/>
    <property type="match status" value="1"/>
</dbReference>
<dbReference type="Pfam" id="PF20431">
    <property type="entry name" value="E_motif"/>
    <property type="match status" value="1"/>
</dbReference>
<dbReference type="Pfam" id="PF01535">
    <property type="entry name" value="PPR"/>
    <property type="match status" value="3"/>
</dbReference>
<dbReference type="Pfam" id="PF12854">
    <property type="entry name" value="PPR_1"/>
    <property type="match status" value="1"/>
</dbReference>
<dbReference type="Pfam" id="PF13041">
    <property type="entry name" value="PPR_2"/>
    <property type="match status" value="2"/>
</dbReference>
<dbReference type="PROSITE" id="PS51375">
    <property type="entry name" value="PPR"/>
    <property type="match status" value="10"/>
</dbReference>
<organism>
    <name type="scientific">Arabidopsis thaliana</name>
    <name type="common">Mouse-ear cress</name>
    <dbReference type="NCBI Taxonomy" id="3702"/>
    <lineage>
        <taxon>Eukaryota</taxon>
        <taxon>Viridiplantae</taxon>
        <taxon>Streptophyta</taxon>
        <taxon>Embryophyta</taxon>
        <taxon>Tracheophyta</taxon>
        <taxon>Spermatophyta</taxon>
        <taxon>Magnoliopsida</taxon>
        <taxon>eudicotyledons</taxon>
        <taxon>Gunneridae</taxon>
        <taxon>Pentapetalae</taxon>
        <taxon>rosids</taxon>
        <taxon>malvids</taxon>
        <taxon>Brassicales</taxon>
        <taxon>Brassicaceae</taxon>
        <taxon>Camelineae</taxon>
        <taxon>Arabidopsis</taxon>
    </lineage>
</organism>